<keyword id="KW-0025">Alternative splicing</keyword>
<keyword id="KW-0472">Membrane</keyword>
<keyword id="KW-1185">Reference proteome</keyword>
<keyword id="KW-0812">Transmembrane</keyword>
<keyword id="KW-1133">Transmembrane helix</keyword>
<organism>
    <name type="scientific">Mus musculus</name>
    <name type="common">Mouse</name>
    <dbReference type="NCBI Taxonomy" id="10090"/>
    <lineage>
        <taxon>Eukaryota</taxon>
        <taxon>Metazoa</taxon>
        <taxon>Chordata</taxon>
        <taxon>Craniata</taxon>
        <taxon>Vertebrata</taxon>
        <taxon>Euteleostomi</taxon>
        <taxon>Mammalia</taxon>
        <taxon>Eutheria</taxon>
        <taxon>Euarchontoglires</taxon>
        <taxon>Glires</taxon>
        <taxon>Rodentia</taxon>
        <taxon>Myomorpha</taxon>
        <taxon>Muroidea</taxon>
        <taxon>Muridae</taxon>
        <taxon>Murinae</taxon>
        <taxon>Mus</taxon>
        <taxon>Mus</taxon>
    </lineage>
</organism>
<feature type="chain" id="PRO_0000318099" description="FERM domain-containing protein 3">
    <location>
        <begin position="1"/>
        <end position="595"/>
    </location>
</feature>
<feature type="transmembrane region" description="Helical" evidence="2">
    <location>
        <begin position="529"/>
        <end position="549"/>
    </location>
</feature>
<feature type="domain" description="FERM" evidence="3">
    <location>
        <begin position="32"/>
        <end position="312"/>
    </location>
</feature>
<feature type="splice variant" id="VSP_031169" description="In isoform 3." evidence="4">
    <location>
        <begin position="1"/>
        <end position="352"/>
    </location>
</feature>
<feature type="splice variant" id="VSP_031170" description="In isoform 3." evidence="4">
    <original>PEVH</original>
    <variation>MSVF</variation>
    <location>
        <begin position="353"/>
        <end position="356"/>
    </location>
</feature>
<feature type="splice variant" id="VSP_031168" description="In isoform 2." evidence="5">
    <original>GIDLSFLCEIRQTPEFEQFHYEYYCPLKEWVAGKVNIVLYMLGCS</original>
    <variation>VSMP</variation>
    <location>
        <begin position="551"/>
        <end position="595"/>
    </location>
</feature>
<feature type="sequence conflict" description="In Ref. 1; BAC27827." evidence="5" ref="1">
    <original>M</original>
    <variation>V</variation>
    <location>
        <position position="405"/>
    </location>
</feature>
<protein>
    <recommendedName>
        <fullName>FERM domain-containing protein 3</fullName>
    </recommendedName>
</protein>
<sequence>MFASCHCAPRGRRTMKMIHFRSSSIKSLNQEMKCTIRLLDDSEVSCHIQRETKGQFLIEYICNYYSLLEKDYFGIRYVDPEKQRHWLEPNKSIFKQMKSHPPYTMCFRVKFYPHEPLKIKEELTRYLLYLQIKRDIFHGRLLCSFSDAAYLGACIVQAEFGDYYPDEHPENYISEFEIFPKQSQKLERKIMEIHNNELRGQSPAIAEFNLLLKAHTLETYGVDPHPCKDSRGATAFLGFTAAGFVVFQGNKRIHLRKWSDVCKLKFEGKTFYVIGSQKEKNAVLAFHTSTPAACKHLWKCGVENQAFYKYAKSSQIKTVSSSKIFFKGSRFRYSGKVAKEVVEASSKIQRDPPEVHRVNITQSRSFHSLNKQLIINMEPLQPLLPSPTEQEEEVPVGEGVPLPKMDVSEPLIASSPVKGAQCADPPDEEEDRVKEDPLTISELAYNPSASLLPTPVDDDEINMLFDCPSRLELEREDTDSFEELEADENAFLIAEEEELKEARQALSWSYSILTGHIWVNPLVKSFSRLLVVGLGLLLFVFPLLLLLLESGIDLSFLCEIRQTPEFEQFHYEYYCPLKEWVAGKVNIVLYMLGCS</sequence>
<dbReference type="EMBL" id="AK032348">
    <property type="protein sequence ID" value="BAC27827.1"/>
    <property type="molecule type" value="mRNA"/>
</dbReference>
<dbReference type="EMBL" id="AK034956">
    <property type="protein sequence ID" value="BAC28893.1"/>
    <property type="molecule type" value="mRNA"/>
</dbReference>
<dbReference type="EMBL" id="AK048561">
    <property type="protein sequence ID" value="BAC33375.1"/>
    <property type="molecule type" value="mRNA"/>
</dbReference>
<dbReference type="EMBL" id="AK149095">
    <property type="protein sequence ID" value="BAE28738.1"/>
    <property type="molecule type" value="mRNA"/>
</dbReference>
<dbReference type="EMBL" id="AL844607">
    <property type="status" value="NOT_ANNOTATED_CDS"/>
    <property type="molecule type" value="Genomic_DNA"/>
</dbReference>
<dbReference type="EMBL" id="BX088570">
    <property type="status" value="NOT_ANNOTATED_CDS"/>
    <property type="molecule type" value="Genomic_DNA"/>
</dbReference>
<dbReference type="EMBL" id="BX957282">
    <property type="status" value="NOT_ANNOTATED_CDS"/>
    <property type="molecule type" value="Genomic_DNA"/>
</dbReference>
<dbReference type="EMBL" id="BC112419">
    <property type="protein sequence ID" value="AAI12420.1"/>
    <property type="molecule type" value="mRNA"/>
</dbReference>
<dbReference type="EMBL" id="BC113795">
    <property type="protein sequence ID" value="AAI13796.1"/>
    <property type="molecule type" value="mRNA"/>
</dbReference>
<dbReference type="EMBL" id="BC118964">
    <property type="protein sequence ID" value="AAI18965.1"/>
    <property type="molecule type" value="mRNA"/>
</dbReference>
<dbReference type="CCDS" id="CCDS38789.1">
    <molecule id="Q8BHD4-1"/>
</dbReference>
<dbReference type="CCDS" id="CCDS51212.1">
    <molecule id="Q8BHD4-2"/>
</dbReference>
<dbReference type="RefSeq" id="NP_001157204.1">
    <molecule id="Q8BHD4-2"/>
    <property type="nucleotide sequence ID" value="NM_001163732.1"/>
</dbReference>
<dbReference type="RefSeq" id="NP_766457.1">
    <molecule id="Q8BHD4-1"/>
    <property type="nucleotide sequence ID" value="NM_172869.5"/>
</dbReference>
<dbReference type="SMR" id="Q8BHD4"/>
<dbReference type="FunCoup" id="Q8BHD4">
    <property type="interactions" value="117"/>
</dbReference>
<dbReference type="STRING" id="10090.ENSMUSP00000081514"/>
<dbReference type="GlyGen" id="Q8BHD4">
    <property type="glycosylation" value="1 site, 1 N-linked glycan (1 site)"/>
</dbReference>
<dbReference type="iPTMnet" id="Q8BHD4"/>
<dbReference type="PhosphoSitePlus" id="Q8BHD4"/>
<dbReference type="PaxDb" id="10090-ENSMUSP00000081514"/>
<dbReference type="ProteomicsDB" id="267518">
    <molecule id="Q8BHD4-1"/>
</dbReference>
<dbReference type="ProteomicsDB" id="267519">
    <molecule id="Q8BHD4-2"/>
</dbReference>
<dbReference type="ProteomicsDB" id="267520">
    <molecule id="Q8BHD4-3"/>
</dbReference>
<dbReference type="Antibodypedia" id="27519">
    <property type="antibodies" value="132 antibodies from 21 providers"/>
</dbReference>
<dbReference type="DNASU" id="242506"/>
<dbReference type="Ensembl" id="ENSMUST00000084474.6">
    <molecule id="Q8BHD4-1"/>
    <property type="protein sequence ID" value="ENSMUSP00000081514.6"/>
    <property type="gene ID" value="ENSMUSG00000049122.18"/>
</dbReference>
<dbReference type="Ensembl" id="ENSMUST00000098006.9">
    <molecule id="Q8BHD4-2"/>
    <property type="protein sequence ID" value="ENSMUSP00000095615.3"/>
    <property type="gene ID" value="ENSMUSG00000049122.18"/>
</dbReference>
<dbReference type="GeneID" id="242506"/>
<dbReference type="KEGG" id="mmu:242506"/>
<dbReference type="UCSC" id="uc008tjg.2">
    <molecule id="Q8BHD4-1"/>
    <property type="organism name" value="mouse"/>
</dbReference>
<dbReference type="UCSC" id="uc008tjh.2">
    <molecule id="Q8BHD4-2"/>
    <property type="organism name" value="mouse"/>
</dbReference>
<dbReference type="AGR" id="MGI:2442466"/>
<dbReference type="CTD" id="257019"/>
<dbReference type="MGI" id="MGI:2442466">
    <property type="gene designation" value="Frmd3"/>
</dbReference>
<dbReference type="VEuPathDB" id="HostDB:ENSMUSG00000049122"/>
<dbReference type="eggNOG" id="KOG3530">
    <property type="taxonomic scope" value="Eukaryota"/>
</dbReference>
<dbReference type="GeneTree" id="ENSGT00940000158577"/>
<dbReference type="HOGENOM" id="CLU_003623_1_7_1"/>
<dbReference type="InParanoid" id="Q8BHD4"/>
<dbReference type="OMA" id="CPLRQWM"/>
<dbReference type="OrthoDB" id="6266673at2759"/>
<dbReference type="PhylomeDB" id="Q8BHD4"/>
<dbReference type="TreeFam" id="TF343477"/>
<dbReference type="BioGRID-ORCS" id="242506">
    <property type="hits" value="1 hit in 78 CRISPR screens"/>
</dbReference>
<dbReference type="ChiTaRS" id="Frmd3">
    <property type="organism name" value="mouse"/>
</dbReference>
<dbReference type="PRO" id="PR:Q8BHD4"/>
<dbReference type="Proteomes" id="UP000000589">
    <property type="component" value="Chromosome 4"/>
</dbReference>
<dbReference type="RNAct" id="Q8BHD4">
    <property type="molecule type" value="protein"/>
</dbReference>
<dbReference type="Bgee" id="ENSMUSG00000049122">
    <property type="expression patterns" value="Expressed in lumbar dorsal root ganglion and 79 other cell types or tissues"/>
</dbReference>
<dbReference type="GO" id="GO:0005856">
    <property type="term" value="C:cytoskeleton"/>
    <property type="evidence" value="ECO:0007669"/>
    <property type="project" value="InterPro"/>
</dbReference>
<dbReference type="GO" id="GO:0016020">
    <property type="term" value="C:membrane"/>
    <property type="evidence" value="ECO:0007669"/>
    <property type="project" value="UniProtKB-SubCell"/>
</dbReference>
<dbReference type="GO" id="GO:0008092">
    <property type="term" value="F:cytoskeletal protein binding"/>
    <property type="evidence" value="ECO:0007669"/>
    <property type="project" value="InterPro"/>
</dbReference>
<dbReference type="CDD" id="cd14473">
    <property type="entry name" value="FERM_B-lobe"/>
    <property type="match status" value="1"/>
</dbReference>
<dbReference type="CDD" id="cd17102">
    <property type="entry name" value="FERM_F1_FRMD3"/>
    <property type="match status" value="1"/>
</dbReference>
<dbReference type="FunFam" id="3.10.20.90:FF:000002">
    <property type="entry name" value="Erythrocyte protein band 4.1-like 3"/>
    <property type="match status" value="1"/>
</dbReference>
<dbReference type="FunFam" id="2.30.29.30:FF:000043">
    <property type="entry name" value="FERM domain-containing protein 5"/>
    <property type="match status" value="1"/>
</dbReference>
<dbReference type="FunFam" id="1.20.80.10:FF:000006">
    <property type="entry name" value="FERM domain-containing protein 5 isoform X1"/>
    <property type="match status" value="1"/>
</dbReference>
<dbReference type="Gene3D" id="1.20.80.10">
    <property type="match status" value="1"/>
</dbReference>
<dbReference type="Gene3D" id="3.10.20.90">
    <property type="entry name" value="Phosphatidylinositol 3-kinase Catalytic Subunit, Chain A, domain 1"/>
    <property type="match status" value="1"/>
</dbReference>
<dbReference type="Gene3D" id="2.30.29.30">
    <property type="entry name" value="Pleckstrin-homology domain (PH domain)/Phosphotyrosine-binding domain (PTB)"/>
    <property type="match status" value="1"/>
</dbReference>
<dbReference type="InterPro" id="IPR019749">
    <property type="entry name" value="Band_41_domain"/>
</dbReference>
<dbReference type="InterPro" id="IPR000798">
    <property type="entry name" value="Ez/rad/moesin-like"/>
</dbReference>
<dbReference type="InterPro" id="IPR014847">
    <property type="entry name" value="FA"/>
</dbReference>
<dbReference type="InterPro" id="IPR014352">
    <property type="entry name" value="FERM/acyl-CoA-bd_prot_sf"/>
</dbReference>
<dbReference type="InterPro" id="IPR035963">
    <property type="entry name" value="FERM_2"/>
</dbReference>
<dbReference type="InterPro" id="IPR019748">
    <property type="entry name" value="FERM_central"/>
</dbReference>
<dbReference type="InterPro" id="IPR019747">
    <property type="entry name" value="FERM_CS"/>
</dbReference>
<dbReference type="InterPro" id="IPR000299">
    <property type="entry name" value="FERM_domain"/>
</dbReference>
<dbReference type="InterPro" id="IPR018979">
    <property type="entry name" value="FERM_N"/>
</dbReference>
<dbReference type="InterPro" id="IPR018980">
    <property type="entry name" value="FERM_PH-like_C"/>
</dbReference>
<dbReference type="InterPro" id="IPR011993">
    <property type="entry name" value="PH-like_dom_sf"/>
</dbReference>
<dbReference type="InterPro" id="IPR029071">
    <property type="entry name" value="Ubiquitin-like_domsf"/>
</dbReference>
<dbReference type="PANTHER" id="PTHR23280">
    <property type="entry name" value="4.1 G PROTEIN"/>
    <property type="match status" value="1"/>
</dbReference>
<dbReference type="PANTHER" id="PTHR23280:SF8">
    <property type="entry name" value="FERM DOMAIN-CONTAINING PROTEIN 3"/>
    <property type="match status" value="1"/>
</dbReference>
<dbReference type="Pfam" id="PF08736">
    <property type="entry name" value="FA"/>
    <property type="match status" value="1"/>
</dbReference>
<dbReference type="Pfam" id="PF09380">
    <property type="entry name" value="FERM_C"/>
    <property type="match status" value="1"/>
</dbReference>
<dbReference type="Pfam" id="PF00373">
    <property type="entry name" value="FERM_M"/>
    <property type="match status" value="1"/>
</dbReference>
<dbReference type="Pfam" id="PF09379">
    <property type="entry name" value="FERM_N"/>
    <property type="match status" value="1"/>
</dbReference>
<dbReference type="PRINTS" id="PR00935">
    <property type="entry name" value="BAND41"/>
</dbReference>
<dbReference type="PRINTS" id="PR00661">
    <property type="entry name" value="ERMFAMILY"/>
</dbReference>
<dbReference type="SMART" id="SM00295">
    <property type="entry name" value="B41"/>
    <property type="match status" value="1"/>
</dbReference>
<dbReference type="SMART" id="SM01195">
    <property type="entry name" value="FA"/>
    <property type="match status" value="1"/>
</dbReference>
<dbReference type="SMART" id="SM01196">
    <property type="entry name" value="FERM_C"/>
    <property type="match status" value="1"/>
</dbReference>
<dbReference type="SUPFAM" id="SSF50729">
    <property type="entry name" value="PH domain-like"/>
    <property type="match status" value="1"/>
</dbReference>
<dbReference type="SUPFAM" id="SSF47031">
    <property type="entry name" value="Second domain of FERM"/>
    <property type="match status" value="1"/>
</dbReference>
<dbReference type="SUPFAM" id="SSF54236">
    <property type="entry name" value="Ubiquitin-like"/>
    <property type="match status" value="1"/>
</dbReference>
<dbReference type="PROSITE" id="PS00660">
    <property type="entry name" value="FERM_1"/>
    <property type="match status" value="1"/>
</dbReference>
<dbReference type="PROSITE" id="PS50057">
    <property type="entry name" value="FERM_3"/>
    <property type="match status" value="1"/>
</dbReference>
<comment type="function">
    <text evidence="1">Putative tumor suppressor gene that may be implicated in the origin and progression of lung cancer.</text>
</comment>
<comment type="subcellular location">
    <subcellularLocation>
        <location evidence="5">Membrane</location>
        <topology evidence="5">Single-pass membrane protein</topology>
    </subcellularLocation>
</comment>
<comment type="alternative products">
    <event type="alternative splicing"/>
    <isoform>
        <id>Q8BHD4-1</id>
        <name>1</name>
        <sequence type="displayed"/>
    </isoform>
    <isoform>
        <id>Q8BHD4-2</id>
        <name>2</name>
        <sequence type="described" ref="VSP_031168"/>
    </isoform>
    <isoform>
        <id>Q8BHD4-3</id>
        <name>3</name>
        <sequence type="described" ref="VSP_031169 VSP_031170"/>
    </isoform>
</comment>
<gene>
    <name type="primary">Frmd3</name>
</gene>
<accession>Q8BHD4</accession>
<accession>A2BEJ6</accession>
<accession>Q3UF23</accession>
<accession>Q5SPU0</accession>
<accession>Q5SPU1</accession>
<accession>Q8C045</accession>
<evidence type="ECO:0000250" key="1"/>
<evidence type="ECO:0000255" key="2"/>
<evidence type="ECO:0000255" key="3">
    <source>
        <dbReference type="PROSITE-ProRule" id="PRU00084"/>
    </source>
</evidence>
<evidence type="ECO:0000303" key="4">
    <source>
    </source>
</evidence>
<evidence type="ECO:0000305" key="5"/>
<reference key="1">
    <citation type="journal article" date="2005" name="Science">
        <title>The transcriptional landscape of the mammalian genome.</title>
        <authorList>
            <person name="Carninci P."/>
            <person name="Kasukawa T."/>
            <person name="Katayama S."/>
            <person name="Gough J."/>
            <person name="Frith M.C."/>
            <person name="Maeda N."/>
            <person name="Oyama R."/>
            <person name="Ravasi T."/>
            <person name="Lenhard B."/>
            <person name="Wells C."/>
            <person name="Kodzius R."/>
            <person name="Shimokawa K."/>
            <person name="Bajic V.B."/>
            <person name="Brenner S.E."/>
            <person name="Batalov S."/>
            <person name="Forrest A.R."/>
            <person name="Zavolan M."/>
            <person name="Davis M.J."/>
            <person name="Wilming L.G."/>
            <person name="Aidinis V."/>
            <person name="Allen J.E."/>
            <person name="Ambesi-Impiombato A."/>
            <person name="Apweiler R."/>
            <person name="Aturaliya R.N."/>
            <person name="Bailey T.L."/>
            <person name="Bansal M."/>
            <person name="Baxter L."/>
            <person name="Beisel K.W."/>
            <person name="Bersano T."/>
            <person name="Bono H."/>
            <person name="Chalk A.M."/>
            <person name="Chiu K.P."/>
            <person name="Choudhary V."/>
            <person name="Christoffels A."/>
            <person name="Clutterbuck D.R."/>
            <person name="Crowe M.L."/>
            <person name="Dalla E."/>
            <person name="Dalrymple B.P."/>
            <person name="de Bono B."/>
            <person name="Della Gatta G."/>
            <person name="di Bernardo D."/>
            <person name="Down T."/>
            <person name="Engstrom P."/>
            <person name="Fagiolini M."/>
            <person name="Faulkner G."/>
            <person name="Fletcher C.F."/>
            <person name="Fukushima T."/>
            <person name="Furuno M."/>
            <person name="Futaki S."/>
            <person name="Gariboldi M."/>
            <person name="Georgii-Hemming P."/>
            <person name="Gingeras T.R."/>
            <person name="Gojobori T."/>
            <person name="Green R.E."/>
            <person name="Gustincich S."/>
            <person name="Harbers M."/>
            <person name="Hayashi Y."/>
            <person name="Hensch T.K."/>
            <person name="Hirokawa N."/>
            <person name="Hill D."/>
            <person name="Huminiecki L."/>
            <person name="Iacono M."/>
            <person name="Ikeo K."/>
            <person name="Iwama A."/>
            <person name="Ishikawa T."/>
            <person name="Jakt M."/>
            <person name="Kanapin A."/>
            <person name="Katoh M."/>
            <person name="Kawasawa Y."/>
            <person name="Kelso J."/>
            <person name="Kitamura H."/>
            <person name="Kitano H."/>
            <person name="Kollias G."/>
            <person name="Krishnan S.P."/>
            <person name="Kruger A."/>
            <person name="Kummerfeld S.K."/>
            <person name="Kurochkin I.V."/>
            <person name="Lareau L.F."/>
            <person name="Lazarevic D."/>
            <person name="Lipovich L."/>
            <person name="Liu J."/>
            <person name="Liuni S."/>
            <person name="McWilliam S."/>
            <person name="Madan Babu M."/>
            <person name="Madera M."/>
            <person name="Marchionni L."/>
            <person name="Matsuda H."/>
            <person name="Matsuzawa S."/>
            <person name="Miki H."/>
            <person name="Mignone F."/>
            <person name="Miyake S."/>
            <person name="Morris K."/>
            <person name="Mottagui-Tabar S."/>
            <person name="Mulder N."/>
            <person name="Nakano N."/>
            <person name="Nakauchi H."/>
            <person name="Ng P."/>
            <person name="Nilsson R."/>
            <person name="Nishiguchi S."/>
            <person name="Nishikawa S."/>
            <person name="Nori F."/>
            <person name="Ohara O."/>
            <person name="Okazaki Y."/>
            <person name="Orlando V."/>
            <person name="Pang K.C."/>
            <person name="Pavan W.J."/>
            <person name="Pavesi G."/>
            <person name="Pesole G."/>
            <person name="Petrovsky N."/>
            <person name="Piazza S."/>
            <person name="Reed J."/>
            <person name="Reid J.F."/>
            <person name="Ring B.Z."/>
            <person name="Ringwald M."/>
            <person name="Rost B."/>
            <person name="Ruan Y."/>
            <person name="Salzberg S.L."/>
            <person name="Sandelin A."/>
            <person name="Schneider C."/>
            <person name="Schoenbach C."/>
            <person name="Sekiguchi K."/>
            <person name="Semple C.A."/>
            <person name="Seno S."/>
            <person name="Sessa L."/>
            <person name="Sheng Y."/>
            <person name="Shibata Y."/>
            <person name="Shimada H."/>
            <person name="Shimada K."/>
            <person name="Silva D."/>
            <person name="Sinclair B."/>
            <person name="Sperling S."/>
            <person name="Stupka E."/>
            <person name="Sugiura K."/>
            <person name="Sultana R."/>
            <person name="Takenaka Y."/>
            <person name="Taki K."/>
            <person name="Tammoja K."/>
            <person name="Tan S.L."/>
            <person name="Tang S."/>
            <person name="Taylor M.S."/>
            <person name="Tegner J."/>
            <person name="Teichmann S.A."/>
            <person name="Ueda H.R."/>
            <person name="van Nimwegen E."/>
            <person name="Verardo R."/>
            <person name="Wei C.L."/>
            <person name="Yagi K."/>
            <person name="Yamanishi H."/>
            <person name="Zabarovsky E."/>
            <person name="Zhu S."/>
            <person name="Zimmer A."/>
            <person name="Hide W."/>
            <person name="Bult C."/>
            <person name="Grimmond S.M."/>
            <person name="Teasdale R.D."/>
            <person name="Liu E.T."/>
            <person name="Brusic V."/>
            <person name="Quackenbush J."/>
            <person name="Wahlestedt C."/>
            <person name="Mattick J.S."/>
            <person name="Hume D.A."/>
            <person name="Kai C."/>
            <person name="Sasaki D."/>
            <person name="Tomaru Y."/>
            <person name="Fukuda S."/>
            <person name="Kanamori-Katayama M."/>
            <person name="Suzuki M."/>
            <person name="Aoki J."/>
            <person name="Arakawa T."/>
            <person name="Iida J."/>
            <person name="Imamura K."/>
            <person name="Itoh M."/>
            <person name="Kato T."/>
            <person name="Kawaji H."/>
            <person name="Kawagashira N."/>
            <person name="Kawashima T."/>
            <person name="Kojima M."/>
            <person name="Kondo S."/>
            <person name="Konno H."/>
            <person name="Nakano K."/>
            <person name="Ninomiya N."/>
            <person name="Nishio T."/>
            <person name="Okada M."/>
            <person name="Plessy C."/>
            <person name="Shibata K."/>
            <person name="Shiraki T."/>
            <person name="Suzuki S."/>
            <person name="Tagami M."/>
            <person name="Waki K."/>
            <person name="Watahiki A."/>
            <person name="Okamura-Oho Y."/>
            <person name="Suzuki H."/>
            <person name="Kawai J."/>
            <person name="Hayashizaki Y."/>
        </authorList>
    </citation>
    <scope>NUCLEOTIDE SEQUENCE [LARGE SCALE MRNA] (ISOFORMS 1 AND 3)</scope>
    <source>
        <strain>C57BL/6J</strain>
        <tissue>Embryo</tissue>
        <tissue>Head</tissue>
        <tissue>Olfactory bulb</tissue>
        <tissue>Sympathetic ganglion</tissue>
    </source>
</reference>
<reference key="2">
    <citation type="journal article" date="2009" name="PLoS Biol.">
        <title>Lineage-specific biology revealed by a finished genome assembly of the mouse.</title>
        <authorList>
            <person name="Church D.M."/>
            <person name="Goodstadt L."/>
            <person name="Hillier L.W."/>
            <person name="Zody M.C."/>
            <person name="Goldstein S."/>
            <person name="She X."/>
            <person name="Bult C.J."/>
            <person name="Agarwala R."/>
            <person name="Cherry J.L."/>
            <person name="DiCuccio M."/>
            <person name="Hlavina W."/>
            <person name="Kapustin Y."/>
            <person name="Meric P."/>
            <person name="Maglott D."/>
            <person name="Birtle Z."/>
            <person name="Marques A.C."/>
            <person name="Graves T."/>
            <person name="Zhou S."/>
            <person name="Teague B."/>
            <person name="Potamousis K."/>
            <person name="Churas C."/>
            <person name="Place M."/>
            <person name="Herschleb J."/>
            <person name="Runnheim R."/>
            <person name="Forrest D."/>
            <person name="Amos-Landgraf J."/>
            <person name="Schwartz D.C."/>
            <person name="Cheng Z."/>
            <person name="Lindblad-Toh K."/>
            <person name="Eichler E.E."/>
            <person name="Ponting C.P."/>
        </authorList>
    </citation>
    <scope>NUCLEOTIDE SEQUENCE [LARGE SCALE GENOMIC DNA]</scope>
    <source>
        <strain>C57BL/6J</strain>
    </source>
</reference>
<reference key="3">
    <citation type="journal article" date="2004" name="Genome Res.">
        <title>The status, quality, and expansion of the NIH full-length cDNA project: the Mammalian Gene Collection (MGC).</title>
        <authorList>
            <consortium name="The MGC Project Team"/>
        </authorList>
    </citation>
    <scope>NUCLEOTIDE SEQUENCE [LARGE SCALE MRNA] (ISOFORM 1)</scope>
</reference>
<name>FRMD3_MOUSE</name>
<proteinExistence type="evidence at transcript level"/>